<accession>Q35380</accession>
<gene>
    <name type="primary">MT-CYB</name>
    <name type="synonym">COB</name>
    <name type="synonym">CYTB</name>
    <name type="synonym">MTCYB</name>
</gene>
<protein>
    <recommendedName>
        <fullName>Cytochrome b</fullName>
    </recommendedName>
    <alternativeName>
        <fullName>Complex III subunit 3</fullName>
    </alternativeName>
    <alternativeName>
        <fullName>Complex III subunit III</fullName>
    </alternativeName>
    <alternativeName>
        <fullName>Cytochrome b-c1 complex subunit 3</fullName>
    </alternativeName>
    <alternativeName>
        <fullName>Ubiquinol-cytochrome-c reductase complex cytochrome b subunit</fullName>
    </alternativeName>
</protein>
<reference key="1">
    <citation type="journal article" date="1994" name="J. Mammal. Evol.">
        <title>Phylogenetic structure of the marsupial family Dasyuridae based on cytochrome-b DNA sequences.</title>
        <authorList>
            <person name="Krajewski C."/>
            <person name="Painter J."/>
            <person name="Buckley L."/>
            <person name="Westerman M."/>
        </authorList>
    </citation>
    <scope>NUCLEOTIDE SEQUENCE [GENOMIC DNA]</scope>
</reference>
<feature type="chain" id="PRO_0000061348" description="Cytochrome b">
    <location>
        <begin position="1"/>
        <end position="381"/>
    </location>
</feature>
<feature type="transmembrane region" description="Helical" evidence="2">
    <location>
        <begin position="33"/>
        <end position="53"/>
    </location>
</feature>
<feature type="transmembrane region" description="Helical" evidence="2">
    <location>
        <begin position="77"/>
        <end position="98"/>
    </location>
</feature>
<feature type="transmembrane region" description="Helical" evidence="2">
    <location>
        <begin position="113"/>
        <end position="133"/>
    </location>
</feature>
<feature type="transmembrane region" description="Helical" evidence="2">
    <location>
        <begin position="178"/>
        <end position="198"/>
    </location>
</feature>
<feature type="transmembrane region" description="Helical" evidence="2">
    <location>
        <begin position="226"/>
        <end position="246"/>
    </location>
</feature>
<feature type="transmembrane region" description="Helical" evidence="2">
    <location>
        <begin position="288"/>
        <end position="308"/>
    </location>
</feature>
<feature type="transmembrane region" description="Helical" evidence="2">
    <location>
        <begin position="320"/>
        <end position="340"/>
    </location>
</feature>
<feature type="transmembrane region" description="Helical" evidence="2">
    <location>
        <begin position="347"/>
        <end position="367"/>
    </location>
</feature>
<feature type="binding site" description="axial binding residue" evidence="2">
    <location>
        <position position="83"/>
    </location>
    <ligand>
        <name>heme b</name>
        <dbReference type="ChEBI" id="CHEBI:60344"/>
        <label>b562</label>
    </ligand>
    <ligandPart>
        <name>Fe</name>
        <dbReference type="ChEBI" id="CHEBI:18248"/>
    </ligandPart>
</feature>
<feature type="binding site" description="axial binding residue" evidence="2">
    <location>
        <position position="97"/>
    </location>
    <ligand>
        <name>heme b</name>
        <dbReference type="ChEBI" id="CHEBI:60344"/>
        <label>b566</label>
    </ligand>
    <ligandPart>
        <name>Fe</name>
        <dbReference type="ChEBI" id="CHEBI:18248"/>
    </ligandPart>
</feature>
<feature type="binding site" description="axial binding residue" evidence="2">
    <location>
        <position position="182"/>
    </location>
    <ligand>
        <name>heme b</name>
        <dbReference type="ChEBI" id="CHEBI:60344"/>
        <label>b562</label>
    </ligand>
    <ligandPart>
        <name>Fe</name>
        <dbReference type="ChEBI" id="CHEBI:18248"/>
    </ligandPart>
</feature>
<feature type="binding site" description="axial binding residue" evidence="2">
    <location>
        <position position="196"/>
    </location>
    <ligand>
        <name>heme b</name>
        <dbReference type="ChEBI" id="CHEBI:60344"/>
        <label>b566</label>
    </ligand>
    <ligandPart>
        <name>Fe</name>
        <dbReference type="ChEBI" id="CHEBI:18248"/>
    </ligandPart>
</feature>
<feature type="binding site" evidence="2">
    <location>
        <position position="201"/>
    </location>
    <ligand>
        <name>a ubiquinone</name>
        <dbReference type="ChEBI" id="CHEBI:16389"/>
    </ligand>
</feature>
<evidence type="ECO:0000250" key="1"/>
<evidence type="ECO:0000250" key="2">
    <source>
        <dbReference type="UniProtKB" id="P00157"/>
    </source>
</evidence>
<evidence type="ECO:0000255" key="3">
    <source>
        <dbReference type="PROSITE-ProRule" id="PRU00967"/>
    </source>
</evidence>
<evidence type="ECO:0000255" key="4">
    <source>
        <dbReference type="PROSITE-ProRule" id="PRU00968"/>
    </source>
</evidence>
<name>CYB_PSEBA</name>
<sequence>MINLRKTHPLLKIINHSFIDLPAPSNISAWWNFGSLLGICLIIQILTGLFLAMHYTSDTLTAFSSVAHICRDVNHGWLLRNLHANGASMFFMCLFLHVGRGIYYGSYLYKETWNIGVILLLTVMATAFVGYVLPWGQMSFWGATVITNLLSTIPYIGTTLAEWIWGGFAVDKATLTRFFAFHFILPFIITALAVVHLLFLHETGSNNPSGINPDSDKIPFHPYYTIKDALGLMLLLLMLLLLALFSPDLLGDPDNFSPANPLNTPPHIKPEWYFLFAYAILRSIPNKLGGVLALLASILILLIIPLLHTANQRSMMFRPISQTLFWILTANLITLTWIGGQPVEQPFIIIGQLAPMLYFLLILVLMPFAGLFENYMLEPEW</sequence>
<geneLocation type="mitochondrion"/>
<keyword id="KW-0249">Electron transport</keyword>
<keyword id="KW-0349">Heme</keyword>
<keyword id="KW-0408">Iron</keyword>
<keyword id="KW-0472">Membrane</keyword>
<keyword id="KW-0479">Metal-binding</keyword>
<keyword id="KW-0496">Mitochondrion</keyword>
<keyword id="KW-0999">Mitochondrion inner membrane</keyword>
<keyword id="KW-0679">Respiratory chain</keyword>
<keyword id="KW-0812">Transmembrane</keyword>
<keyword id="KW-1133">Transmembrane helix</keyword>
<keyword id="KW-0813">Transport</keyword>
<keyword id="KW-0830">Ubiquinone</keyword>
<proteinExistence type="inferred from homology"/>
<dbReference type="EMBL" id="U07588">
    <property type="protein sequence ID" value="AAB88764.1"/>
    <property type="molecule type" value="Genomic_DNA"/>
</dbReference>
<dbReference type="SMR" id="Q35380"/>
<dbReference type="GO" id="GO:0005743">
    <property type="term" value="C:mitochondrial inner membrane"/>
    <property type="evidence" value="ECO:0007669"/>
    <property type="project" value="UniProtKB-SubCell"/>
</dbReference>
<dbReference type="GO" id="GO:0045275">
    <property type="term" value="C:respiratory chain complex III"/>
    <property type="evidence" value="ECO:0007669"/>
    <property type="project" value="InterPro"/>
</dbReference>
<dbReference type="GO" id="GO:0046872">
    <property type="term" value="F:metal ion binding"/>
    <property type="evidence" value="ECO:0007669"/>
    <property type="project" value="UniProtKB-KW"/>
</dbReference>
<dbReference type="GO" id="GO:0008121">
    <property type="term" value="F:ubiquinol-cytochrome-c reductase activity"/>
    <property type="evidence" value="ECO:0007669"/>
    <property type="project" value="InterPro"/>
</dbReference>
<dbReference type="GO" id="GO:0006122">
    <property type="term" value="P:mitochondrial electron transport, ubiquinol to cytochrome c"/>
    <property type="evidence" value="ECO:0007669"/>
    <property type="project" value="TreeGrafter"/>
</dbReference>
<dbReference type="CDD" id="cd00290">
    <property type="entry name" value="cytochrome_b_C"/>
    <property type="match status" value="1"/>
</dbReference>
<dbReference type="CDD" id="cd00284">
    <property type="entry name" value="Cytochrome_b_N"/>
    <property type="match status" value="1"/>
</dbReference>
<dbReference type="FunFam" id="1.20.810.10:FF:000002">
    <property type="entry name" value="Cytochrome b"/>
    <property type="match status" value="1"/>
</dbReference>
<dbReference type="Gene3D" id="1.20.810.10">
    <property type="entry name" value="Cytochrome Bc1 Complex, Chain C"/>
    <property type="match status" value="1"/>
</dbReference>
<dbReference type="InterPro" id="IPR005798">
    <property type="entry name" value="Cyt_b/b6_C"/>
</dbReference>
<dbReference type="InterPro" id="IPR036150">
    <property type="entry name" value="Cyt_b/b6_C_sf"/>
</dbReference>
<dbReference type="InterPro" id="IPR005797">
    <property type="entry name" value="Cyt_b/b6_N"/>
</dbReference>
<dbReference type="InterPro" id="IPR027387">
    <property type="entry name" value="Cytb/b6-like_sf"/>
</dbReference>
<dbReference type="InterPro" id="IPR030689">
    <property type="entry name" value="Cytochrome_b"/>
</dbReference>
<dbReference type="InterPro" id="IPR048260">
    <property type="entry name" value="Cytochrome_b_C_euk/bac"/>
</dbReference>
<dbReference type="InterPro" id="IPR048259">
    <property type="entry name" value="Cytochrome_b_N_euk/bac"/>
</dbReference>
<dbReference type="InterPro" id="IPR016174">
    <property type="entry name" value="Di-haem_cyt_TM"/>
</dbReference>
<dbReference type="PANTHER" id="PTHR19271">
    <property type="entry name" value="CYTOCHROME B"/>
    <property type="match status" value="1"/>
</dbReference>
<dbReference type="PANTHER" id="PTHR19271:SF16">
    <property type="entry name" value="CYTOCHROME B"/>
    <property type="match status" value="1"/>
</dbReference>
<dbReference type="Pfam" id="PF00032">
    <property type="entry name" value="Cytochrom_B_C"/>
    <property type="match status" value="1"/>
</dbReference>
<dbReference type="Pfam" id="PF00033">
    <property type="entry name" value="Cytochrome_B"/>
    <property type="match status" value="1"/>
</dbReference>
<dbReference type="PIRSF" id="PIRSF038885">
    <property type="entry name" value="COB"/>
    <property type="match status" value="1"/>
</dbReference>
<dbReference type="SUPFAM" id="SSF81648">
    <property type="entry name" value="a domain/subunit of cytochrome bc1 complex (Ubiquinol-cytochrome c reductase)"/>
    <property type="match status" value="1"/>
</dbReference>
<dbReference type="SUPFAM" id="SSF81342">
    <property type="entry name" value="Transmembrane di-heme cytochromes"/>
    <property type="match status" value="1"/>
</dbReference>
<dbReference type="PROSITE" id="PS51003">
    <property type="entry name" value="CYTB_CTER"/>
    <property type="match status" value="1"/>
</dbReference>
<dbReference type="PROSITE" id="PS51002">
    <property type="entry name" value="CYTB_NTER"/>
    <property type="match status" value="1"/>
</dbReference>
<comment type="function">
    <text evidence="2">Component of the ubiquinol-cytochrome c reductase complex (complex III or cytochrome b-c1 complex) that is part of the mitochondrial respiratory chain. The b-c1 complex mediates electron transfer from ubiquinol to cytochrome c. Contributes to the generation of a proton gradient across the mitochondrial membrane that is then used for ATP synthesis.</text>
</comment>
<comment type="cofactor">
    <cofactor evidence="2">
        <name>heme b</name>
        <dbReference type="ChEBI" id="CHEBI:60344"/>
    </cofactor>
    <text evidence="2">Binds 2 heme b groups non-covalently.</text>
</comment>
<comment type="subunit">
    <text evidence="2">The cytochrome bc1 complex contains 11 subunits: 3 respiratory subunits (MT-CYB, CYC1 and UQCRFS1), 2 core proteins (UQCRC1 and UQCRC2) and 6 low-molecular weight proteins (UQCRH/QCR6, UQCRB/QCR7, UQCRQ/QCR8, UQCR10/QCR9, UQCR11/QCR10 and a cleavage product of UQCRFS1). This cytochrome bc1 complex then forms a dimer.</text>
</comment>
<comment type="subcellular location">
    <subcellularLocation>
        <location evidence="2">Mitochondrion inner membrane</location>
        <topology evidence="2">Multi-pass membrane protein</topology>
    </subcellularLocation>
</comment>
<comment type="miscellaneous">
    <text evidence="1">Heme 1 (or BL or b562) is low-potential and absorbs at about 562 nm, and heme 2 (or BH or b566) is high-potential and absorbs at about 566 nm.</text>
</comment>
<comment type="similarity">
    <text evidence="3 4">Belongs to the cytochrome b family.</text>
</comment>
<comment type="caution">
    <text evidence="2">The full-length protein contains only eight transmembrane helices, not nine as predicted by bioinformatics tools.</text>
</comment>
<organism>
    <name type="scientific">Pseudantechinus bilarni</name>
    <name type="common">Sandstone dibbler</name>
    <name type="synonym">Parantechinus bilarni</name>
    <dbReference type="NCBI Taxonomy" id="479705"/>
    <lineage>
        <taxon>Eukaryota</taxon>
        <taxon>Metazoa</taxon>
        <taxon>Chordata</taxon>
        <taxon>Craniata</taxon>
        <taxon>Vertebrata</taxon>
        <taxon>Euteleostomi</taxon>
        <taxon>Mammalia</taxon>
        <taxon>Metatheria</taxon>
        <taxon>Dasyuromorphia</taxon>
        <taxon>Dasyuridae</taxon>
        <taxon>Pseudantechinus</taxon>
    </lineage>
</organism>